<name>SYH_UREPA</name>
<comment type="catalytic activity">
    <reaction evidence="1">
        <text>tRNA(His) + L-histidine + ATP = L-histidyl-tRNA(His) + AMP + diphosphate + H(+)</text>
        <dbReference type="Rhea" id="RHEA:17313"/>
        <dbReference type="Rhea" id="RHEA-COMP:9665"/>
        <dbReference type="Rhea" id="RHEA-COMP:9689"/>
        <dbReference type="ChEBI" id="CHEBI:15378"/>
        <dbReference type="ChEBI" id="CHEBI:30616"/>
        <dbReference type="ChEBI" id="CHEBI:33019"/>
        <dbReference type="ChEBI" id="CHEBI:57595"/>
        <dbReference type="ChEBI" id="CHEBI:78442"/>
        <dbReference type="ChEBI" id="CHEBI:78527"/>
        <dbReference type="ChEBI" id="CHEBI:456215"/>
        <dbReference type="EC" id="6.1.1.21"/>
    </reaction>
</comment>
<comment type="subunit">
    <text evidence="1">Homodimer.</text>
</comment>
<comment type="subcellular location">
    <subcellularLocation>
        <location evidence="1">Cytoplasm</location>
    </subcellularLocation>
</comment>
<comment type="similarity">
    <text evidence="1">Belongs to the class-II aminoacyl-tRNA synthetase family.</text>
</comment>
<accession>Q9PQK6</accession>
<evidence type="ECO:0000255" key="1">
    <source>
        <dbReference type="HAMAP-Rule" id="MF_00127"/>
    </source>
</evidence>
<sequence>MINYSKPRGTIDLYNKEMNDFKLLENFLLSTTKRYGFQQIKTPVFEFAELFMKSAGESSDLVSKEMYLFKDKSDRWLALRPEGTAGVIRAVVENKLLLNHPLPLKLMYFEPCFRYERPQAGRQRQFHQFGVEVLGTKNIYYDFELIALADTILKKLMISNYILEINYISSPHNRSLWVKSLQEYFHLHRTELTPLSQERITTNPLRILDDKLESQKLVVKQAPKISHFLSNEEKEEFNLIKKMLDDYNIKYYVNEGLVRGLDYYSGLVFEFISTSPKLLGQSTIIGGGRYGELIKQTGGPNYEGIGFGIGIERLLIALSETNKNILNTDDDKYLIAFFDKELENEAIKLTQILRINNQLNVDIILSSTKADKIFKLAQRLNVKKLIILAKKEWSDKKIILKDLLNFKQDLLSLDEIKGIR</sequence>
<keyword id="KW-0030">Aminoacyl-tRNA synthetase</keyword>
<keyword id="KW-0067">ATP-binding</keyword>
<keyword id="KW-0963">Cytoplasm</keyword>
<keyword id="KW-0436">Ligase</keyword>
<keyword id="KW-0547">Nucleotide-binding</keyword>
<keyword id="KW-0648">Protein biosynthesis</keyword>
<keyword id="KW-1185">Reference proteome</keyword>
<proteinExistence type="inferred from homology"/>
<organism>
    <name type="scientific">Ureaplasma parvum serovar 3 (strain ATCC 700970)</name>
    <dbReference type="NCBI Taxonomy" id="273119"/>
    <lineage>
        <taxon>Bacteria</taxon>
        <taxon>Bacillati</taxon>
        <taxon>Mycoplasmatota</taxon>
        <taxon>Mycoplasmoidales</taxon>
        <taxon>Mycoplasmoidaceae</taxon>
        <taxon>Ureaplasma</taxon>
    </lineage>
</organism>
<protein>
    <recommendedName>
        <fullName evidence="1">Histidine--tRNA ligase</fullName>
        <ecNumber evidence="1">6.1.1.21</ecNumber>
    </recommendedName>
    <alternativeName>
        <fullName evidence="1">Histidyl-tRNA synthetase</fullName>
        <shortName evidence="1">HisRS</shortName>
    </alternativeName>
</protein>
<gene>
    <name evidence="1" type="primary">hisS</name>
    <name type="ordered locus">UU285</name>
</gene>
<dbReference type="EC" id="6.1.1.21" evidence="1"/>
<dbReference type="EMBL" id="AF222894">
    <property type="protein sequence ID" value="AAF30694.1"/>
    <property type="molecule type" value="Genomic_DNA"/>
</dbReference>
<dbReference type="RefSeq" id="WP_006688869.1">
    <property type="nucleotide sequence ID" value="NC_002162.1"/>
</dbReference>
<dbReference type="SMR" id="Q9PQK6"/>
<dbReference type="STRING" id="273119.UU285"/>
<dbReference type="EnsemblBacteria" id="AAF30694">
    <property type="protein sequence ID" value="AAF30694"/>
    <property type="gene ID" value="UU285"/>
</dbReference>
<dbReference type="GeneID" id="29672568"/>
<dbReference type="KEGG" id="uur:UU285"/>
<dbReference type="eggNOG" id="COG0124">
    <property type="taxonomic scope" value="Bacteria"/>
</dbReference>
<dbReference type="HOGENOM" id="CLU_025113_1_1_14"/>
<dbReference type="OrthoDB" id="9800814at2"/>
<dbReference type="Proteomes" id="UP000000423">
    <property type="component" value="Chromosome"/>
</dbReference>
<dbReference type="GO" id="GO:0005737">
    <property type="term" value="C:cytoplasm"/>
    <property type="evidence" value="ECO:0007669"/>
    <property type="project" value="UniProtKB-SubCell"/>
</dbReference>
<dbReference type="GO" id="GO:0005524">
    <property type="term" value="F:ATP binding"/>
    <property type="evidence" value="ECO:0007669"/>
    <property type="project" value="UniProtKB-UniRule"/>
</dbReference>
<dbReference type="GO" id="GO:0004821">
    <property type="term" value="F:histidine-tRNA ligase activity"/>
    <property type="evidence" value="ECO:0007669"/>
    <property type="project" value="UniProtKB-UniRule"/>
</dbReference>
<dbReference type="GO" id="GO:0006427">
    <property type="term" value="P:histidyl-tRNA aminoacylation"/>
    <property type="evidence" value="ECO:0007669"/>
    <property type="project" value="UniProtKB-UniRule"/>
</dbReference>
<dbReference type="CDD" id="cd00773">
    <property type="entry name" value="HisRS-like_core"/>
    <property type="match status" value="1"/>
</dbReference>
<dbReference type="Gene3D" id="3.40.50.800">
    <property type="entry name" value="Anticodon-binding domain"/>
    <property type="match status" value="1"/>
</dbReference>
<dbReference type="Gene3D" id="3.30.930.10">
    <property type="entry name" value="Bira Bifunctional Protein, Domain 2"/>
    <property type="match status" value="1"/>
</dbReference>
<dbReference type="HAMAP" id="MF_00127">
    <property type="entry name" value="His_tRNA_synth"/>
    <property type="match status" value="1"/>
</dbReference>
<dbReference type="InterPro" id="IPR006195">
    <property type="entry name" value="aa-tRNA-synth_II"/>
</dbReference>
<dbReference type="InterPro" id="IPR045864">
    <property type="entry name" value="aa-tRNA-synth_II/BPL/LPL"/>
</dbReference>
<dbReference type="InterPro" id="IPR036621">
    <property type="entry name" value="Anticodon-bd_dom_sf"/>
</dbReference>
<dbReference type="InterPro" id="IPR015807">
    <property type="entry name" value="His-tRNA-ligase"/>
</dbReference>
<dbReference type="InterPro" id="IPR041715">
    <property type="entry name" value="HisRS-like_core"/>
</dbReference>
<dbReference type="InterPro" id="IPR004516">
    <property type="entry name" value="HisRS/HisZ"/>
</dbReference>
<dbReference type="NCBIfam" id="TIGR00442">
    <property type="entry name" value="hisS"/>
    <property type="match status" value="1"/>
</dbReference>
<dbReference type="PANTHER" id="PTHR43707:SF1">
    <property type="entry name" value="HISTIDINE--TRNA LIGASE, MITOCHONDRIAL-RELATED"/>
    <property type="match status" value="1"/>
</dbReference>
<dbReference type="PANTHER" id="PTHR43707">
    <property type="entry name" value="HISTIDYL-TRNA SYNTHETASE"/>
    <property type="match status" value="1"/>
</dbReference>
<dbReference type="Pfam" id="PF13393">
    <property type="entry name" value="tRNA-synt_His"/>
    <property type="match status" value="1"/>
</dbReference>
<dbReference type="PIRSF" id="PIRSF001549">
    <property type="entry name" value="His-tRNA_synth"/>
    <property type="match status" value="1"/>
</dbReference>
<dbReference type="SUPFAM" id="SSF52954">
    <property type="entry name" value="Class II aaRS ABD-related"/>
    <property type="match status" value="1"/>
</dbReference>
<dbReference type="SUPFAM" id="SSF55681">
    <property type="entry name" value="Class II aaRS and biotin synthetases"/>
    <property type="match status" value="1"/>
</dbReference>
<dbReference type="PROSITE" id="PS50862">
    <property type="entry name" value="AA_TRNA_LIGASE_II"/>
    <property type="match status" value="1"/>
</dbReference>
<feature type="chain" id="PRO_0000136289" description="Histidine--tRNA ligase">
    <location>
        <begin position="1"/>
        <end position="420"/>
    </location>
</feature>
<reference key="1">
    <citation type="journal article" date="2000" name="Nature">
        <title>The complete sequence of the mucosal pathogen Ureaplasma urealyticum.</title>
        <authorList>
            <person name="Glass J.I."/>
            <person name="Lefkowitz E.J."/>
            <person name="Glass J.S."/>
            <person name="Heiner C.R."/>
            <person name="Chen E.Y."/>
            <person name="Cassell G.H."/>
        </authorList>
    </citation>
    <scope>NUCLEOTIDE SEQUENCE [LARGE SCALE GENOMIC DNA]</scope>
    <source>
        <strain>ATCC 700970</strain>
    </source>
</reference>